<feature type="chain" id="PRO_0000264049" description="Peptidyl-tRNA hydrolase">
    <location>
        <begin position="1"/>
        <end position="239"/>
    </location>
</feature>
<feature type="region of interest" description="Disordered" evidence="2">
    <location>
        <begin position="188"/>
        <end position="239"/>
    </location>
</feature>
<feature type="compositionally biased region" description="Basic and acidic residues" evidence="2">
    <location>
        <begin position="198"/>
        <end position="239"/>
    </location>
</feature>
<feature type="active site" description="Proton acceptor" evidence="1">
    <location>
        <position position="19"/>
    </location>
</feature>
<feature type="binding site" evidence="1">
    <location>
        <position position="14"/>
    </location>
    <ligand>
        <name>tRNA</name>
        <dbReference type="ChEBI" id="CHEBI:17843"/>
    </ligand>
</feature>
<feature type="binding site" evidence="1">
    <location>
        <position position="64"/>
    </location>
    <ligand>
        <name>tRNA</name>
        <dbReference type="ChEBI" id="CHEBI:17843"/>
    </ligand>
</feature>
<feature type="binding site" evidence="1">
    <location>
        <position position="66"/>
    </location>
    <ligand>
        <name>tRNA</name>
        <dbReference type="ChEBI" id="CHEBI:17843"/>
    </ligand>
</feature>
<feature type="binding site" evidence="1">
    <location>
        <position position="112"/>
    </location>
    <ligand>
        <name>tRNA</name>
        <dbReference type="ChEBI" id="CHEBI:17843"/>
    </ligand>
</feature>
<feature type="site" description="Discriminates between blocked and unblocked aminoacyl-tRNA" evidence="1">
    <location>
        <position position="9"/>
    </location>
</feature>
<feature type="site" description="Stabilizes the basic form of H active site to accept a proton" evidence="1">
    <location>
        <position position="91"/>
    </location>
</feature>
<sequence>MQLWVGLGNPGAKYAGNRHNIGWMAVDRVAEDHGFAPWRAKFQGEVSEGVLDGEKVLLLKPTTFMNLSGQSVGEAMRFYKLDSTDVTVWHDEIDLAPAKIRVKAGGGHAGHNGLRSIHQHIGPHYDRVRLGVGHPGHKDRVPGYVLSDFAKADAGWLDDVLRGVSDGAPHLARGDGGKFLNAVALRVAPPRSSTSKPKAQDNREDAAQAAEERSETRTPPEARPEDTRSALQKLADKFR</sequence>
<accession>Q28LA3</accession>
<comment type="function">
    <text evidence="1">Hydrolyzes ribosome-free peptidyl-tRNAs (with 1 or more amino acids incorporated), which drop off the ribosome during protein synthesis, or as a result of ribosome stalling.</text>
</comment>
<comment type="function">
    <text evidence="1">Catalyzes the release of premature peptidyl moieties from peptidyl-tRNA molecules trapped in stalled 50S ribosomal subunits, and thus maintains levels of free tRNAs and 50S ribosomes.</text>
</comment>
<comment type="catalytic activity">
    <reaction evidence="1">
        <text>an N-acyl-L-alpha-aminoacyl-tRNA + H2O = an N-acyl-L-amino acid + a tRNA + H(+)</text>
        <dbReference type="Rhea" id="RHEA:54448"/>
        <dbReference type="Rhea" id="RHEA-COMP:10123"/>
        <dbReference type="Rhea" id="RHEA-COMP:13883"/>
        <dbReference type="ChEBI" id="CHEBI:15377"/>
        <dbReference type="ChEBI" id="CHEBI:15378"/>
        <dbReference type="ChEBI" id="CHEBI:59874"/>
        <dbReference type="ChEBI" id="CHEBI:78442"/>
        <dbReference type="ChEBI" id="CHEBI:138191"/>
        <dbReference type="EC" id="3.1.1.29"/>
    </reaction>
</comment>
<comment type="subunit">
    <text evidence="1">Monomer.</text>
</comment>
<comment type="subcellular location">
    <subcellularLocation>
        <location evidence="1">Cytoplasm</location>
    </subcellularLocation>
</comment>
<comment type="similarity">
    <text evidence="1">Belongs to the PTH family.</text>
</comment>
<proteinExistence type="inferred from homology"/>
<name>PTH_JANSC</name>
<evidence type="ECO:0000255" key="1">
    <source>
        <dbReference type="HAMAP-Rule" id="MF_00083"/>
    </source>
</evidence>
<evidence type="ECO:0000256" key="2">
    <source>
        <dbReference type="SAM" id="MobiDB-lite"/>
    </source>
</evidence>
<gene>
    <name evidence="1" type="primary">pth</name>
    <name type="ordered locus">Jann_3592</name>
</gene>
<dbReference type="EC" id="3.1.1.29" evidence="1"/>
<dbReference type="EMBL" id="CP000264">
    <property type="protein sequence ID" value="ABD56509.1"/>
    <property type="molecule type" value="Genomic_DNA"/>
</dbReference>
<dbReference type="RefSeq" id="WP_011456709.1">
    <property type="nucleotide sequence ID" value="NC_007802.1"/>
</dbReference>
<dbReference type="SMR" id="Q28LA3"/>
<dbReference type="STRING" id="290400.Jann_3592"/>
<dbReference type="KEGG" id="jan:Jann_3592"/>
<dbReference type="eggNOG" id="COG0193">
    <property type="taxonomic scope" value="Bacteria"/>
</dbReference>
<dbReference type="HOGENOM" id="CLU_062456_1_0_5"/>
<dbReference type="OrthoDB" id="9800507at2"/>
<dbReference type="Proteomes" id="UP000008326">
    <property type="component" value="Chromosome"/>
</dbReference>
<dbReference type="GO" id="GO:0005737">
    <property type="term" value="C:cytoplasm"/>
    <property type="evidence" value="ECO:0007669"/>
    <property type="project" value="UniProtKB-SubCell"/>
</dbReference>
<dbReference type="GO" id="GO:0004045">
    <property type="term" value="F:peptidyl-tRNA hydrolase activity"/>
    <property type="evidence" value="ECO:0007669"/>
    <property type="project" value="UniProtKB-UniRule"/>
</dbReference>
<dbReference type="GO" id="GO:0000049">
    <property type="term" value="F:tRNA binding"/>
    <property type="evidence" value="ECO:0007669"/>
    <property type="project" value="UniProtKB-UniRule"/>
</dbReference>
<dbReference type="GO" id="GO:0006515">
    <property type="term" value="P:protein quality control for misfolded or incompletely synthesized proteins"/>
    <property type="evidence" value="ECO:0007669"/>
    <property type="project" value="UniProtKB-UniRule"/>
</dbReference>
<dbReference type="GO" id="GO:0072344">
    <property type="term" value="P:rescue of stalled ribosome"/>
    <property type="evidence" value="ECO:0007669"/>
    <property type="project" value="UniProtKB-UniRule"/>
</dbReference>
<dbReference type="CDD" id="cd00462">
    <property type="entry name" value="PTH"/>
    <property type="match status" value="1"/>
</dbReference>
<dbReference type="FunFam" id="3.40.50.1470:FF:000001">
    <property type="entry name" value="Peptidyl-tRNA hydrolase"/>
    <property type="match status" value="1"/>
</dbReference>
<dbReference type="Gene3D" id="3.40.50.1470">
    <property type="entry name" value="Peptidyl-tRNA hydrolase"/>
    <property type="match status" value="1"/>
</dbReference>
<dbReference type="HAMAP" id="MF_00083">
    <property type="entry name" value="Pept_tRNA_hydro_bact"/>
    <property type="match status" value="1"/>
</dbReference>
<dbReference type="InterPro" id="IPR001328">
    <property type="entry name" value="Pept_tRNA_hydro"/>
</dbReference>
<dbReference type="InterPro" id="IPR018171">
    <property type="entry name" value="Pept_tRNA_hydro_CS"/>
</dbReference>
<dbReference type="InterPro" id="IPR036416">
    <property type="entry name" value="Pept_tRNA_hydro_sf"/>
</dbReference>
<dbReference type="NCBIfam" id="TIGR00447">
    <property type="entry name" value="pth"/>
    <property type="match status" value="1"/>
</dbReference>
<dbReference type="PANTHER" id="PTHR17224">
    <property type="entry name" value="PEPTIDYL-TRNA HYDROLASE"/>
    <property type="match status" value="1"/>
</dbReference>
<dbReference type="PANTHER" id="PTHR17224:SF1">
    <property type="entry name" value="PEPTIDYL-TRNA HYDROLASE"/>
    <property type="match status" value="1"/>
</dbReference>
<dbReference type="Pfam" id="PF01195">
    <property type="entry name" value="Pept_tRNA_hydro"/>
    <property type="match status" value="1"/>
</dbReference>
<dbReference type="SUPFAM" id="SSF53178">
    <property type="entry name" value="Peptidyl-tRNA hydrolase-like"/>
    <property type="match status" value="1"/>
</dbReference>
<dbReference type="PROSITE" id="PS01195">
    <property type="entry name" value="PEPT_TRNA_HYDROL_1"/>
    <property type="match status" value="1"/>
</dbReference>
<dbReference type="PROSITE" id="PS01196">
    <property type="entry name" value="PEPT_TRNA_HYDROL_2"/>
    <property type="match status" value="1"/>
</dbReference>
<reference key="1">
    <citation type="submission" date="2006-02" db="EMBL/GenBank/DDBJ databases">
        <title>Complete sequence of chromosome of Jannaschia sp. CCS1.</title>
        <authorList>
            <consortium name="US DOE Joint Genome Institute"/>
            <person name="Copeland A."/>
            <person name="Lucas S."/>
            <person name="Lapidus A."/>
            <person name="Barry K."/>
            <person name="Detter J.C."/>
            <person name="Glavina del Rio T."/>
            <person name="Hammon N."/>
            <person name="Israni S."/>
            <person name="Pitluck S."/>
            <person name="Brettin T."/>
            <person name="Bruce D."/>
            <person name="Han C."/>
            <person name="Tapia R."/>
            <person name="Gilna P."/>
            <person name="Chertkov O."/>
            <person name="Saunders E."/>
            <person name="Schmutz J."/>
            <person name="Larimer F."/>
            <person name="Land M."/>
            <person name="Kyrpides N."/>
            <person name="Lykidis A."/>
            <person name="Moran M.A."/>
            <person name="Belas R."/>
            <person name="Ye W."/>
            <person name="Buchan A."/>
            <person name="Gonzalez J.M."/>
            <person name="Schell M.A."/>
            <person name="Richardson P."/>
        </authorList>
    </citation>
    <scope>NUCLEOTIDE SEQUENCE [LARGE SCALE GENOMIC DNA]</scope>
    <source>
        <strain>CCS1</strain>
    </source>
</reference>
<protein>
    <recommendedName>
        <fullName evidence="1">Peptidyl-tRNA hydrolase</fullName>
        <shortName evidence="1">Pth</shortName>
        <ecNumber evidence="1">3.1.1.29</ecNumber>
    </recommendedName>
</protein>
<organism>
    <name type="scientific">Jannaschia sp. (strain CCS1)</name>
    <dbReference type="NCBI Taxonomy" id="290400"/>
    <lineage>
        <taxon>Bacteria</taxon>
        <taxon>Pseudomonadati</taxon>
        <taxon>Pseudomonadota</taxon>
        <taxon>Alphaproteobacteria</taxon>
        <taxon>Rhodobacterales</taxon>
        <taxon>Roseobacteraceae</taxon>
        <taxon>Jannaschia</taxon>
    </lineage>
</organism>
<keyword id="KW-0963">Cytoplasm</keyword>
<keyword id="KW-0378">Hydrolase</keyword>
<keyword id="KW-1185">Reference proteome</keyword>
<keyword id="KW-0694">RNA-binding</keyword>
<keyword id="KW-0820">tRNA-binding</keyword>